<gene>
    <name evidence="2" type="primary">plpp7</name>
    <name type="synonym">ppapdc3</name>
    <name type="ORF">zgc:77336</name>
</gene>
<organism>
    <name type="scientific">Danio rerio</name>
    <name type="common">Zebrafish</name>
    <name type="synonym">Brachydanio rerio</name>
    <dbReference type="NCBI Taxonomy" id="7955"/>
    <lineage>
        <taxon>Eukaryota</taxon>
        <taxon>Metazoa</taxon>
        <taxon>Chordata</taxon>
        <taxon>Craniata</taxon>
        <taxon>Vertebrata</taxon>
        <taxon>Euteleostomi</taxon>
        <taxon>Actinopterygii</taxon>
        <taxon>Neopterygii</taxon>
        <taxon>Teleostei</taxon>
        <taxon>Ostariophysi</taxon>
        <taxon>Cypriniformes</taxon>
        <taxon>Danionidae</taxon>
        <taxon>Danioninae</taxon>
        <taxon>Danio</taxon>
    </lineage>
</organism>
<dbReference type="EMBL" id="BC065648">
    <property type="protein sequence ID" value="AAH65648.1"/>
    <property type="molecule type" value="mRNA"/>
</dbReference>
<dbReference type="RefSeq" id="NP_991223.1">
    <property type="nucleotide sequence ID" value="NM_205660.1"/>
</dbReference>
<dbReference type="SMR" id="Q6P0E8"/>
<dbReference type="FunCoup" id="Q6P0E8">
    <property type="interactions" value="189"/>
</dbReference>
<dbReference type="STRING" id="7955.ENSDARP00000139196"/>
<dbReference type="PaxDb" id="7955-ENSDARP00000101044"/>
<dbReference type="Ensembl" id="ENSDART00000162246">
    <property type="protein sequence ID" value="ENSDARP00000139196"/>
    <property type="gene ID" value="ENSDARG00000103712"/>
</dbReference>
<dbReference type="GeneID" id="402958"/>
<dbReference type="KEGG" id="dre:402958"/>
<dbReference type="AGR" id="ZFIN:ZDB-GENE-040426-1822"/>
<dbReference type="CTD" id="402958"/>
<dbReference type="ZFIN" id="ZDB-GENE-040426-1822">
    <property type="gene designation" value="plpp7a"/>
</dbReference>
<dbReference type="eggNOG" id="KOG4268">
    <property type="taxonomic scope" value="Eukaryota"/>
</dbReference>
<dbReference type="HOGENOM" id="CLU_072573_4_0_1"/>
<dbReference type="InParanoid" id="Q6P0E8"/>
<dbReference type="OMA" id="FPEEDCM"/>
<dbReference type="OrthoDB" id="10266771at2759"/>
<dbReference type="PhylomeDB" id="Q6P0E8"/>
<dbReference type="PRO" id="PR:Q6P0E8"/>
<dbReference type="Proteomes" id="UP000000437">
    <property type="component" value="Chromosome 5"/>
</dbReference>
<dbReference type="Bgee" id="ENSDARG00000103712">
    <property type="expression patterns" value="Expressed in muscle tissue and 27 other cell types or tissues"/>
</dbReference>
<dbReference type="GO" id="GO:0005789">
    <property type="term" value="C:endoplasmic reticulum membrane"/>
    <property type="evidence" value="ECO:0007669"/>
    <property type="project" value="UniProtKB-SubCell"/>
</dbReference>
<dbReference type="GO" id="GO:0016020">
    <property type="term" value="C:membrane"/>
    <property type="evidence" value="ECO:0000318"/>
    <property type="project" value="GO_Central"/>
</dbReference>
<dbReference type="GO" id="GO:0005635">
    <property type="term" value="C:nuclear envelope"/>
    <property type="evidence" value="ECO:0000318"/>
    <property type="project" value="GO_Central"/>
</dbReference>
<dbReference type="GO" id="GO:0042392">
    <property type="term" value="F:sphingosine-1-phosphate phosphatase activity"/>
    <property type="evidence" value="ECO:0000318"/>
    <property type="project" value="GO_Central"/>
</dbReference>
<dbReference type="CDD" id="cd03391">
    <property type="entry name" value="PAP2_containing_2_like"/>
    <property type="match status" value="1"/>
</dbReference>
<dbReference type="Gene3D" id="1.20.144.10">
    <property type="entry name" value="Phosphatidic acid phosphatase type 2/haloperoxidase"/>
    <property type="match status" value="1"/>
</dbReference>
<dbReference type="InterPro" id="IPR036938">
    <property type="entry name" value="P_Acid_Pase_2/haloperoxi_sf"/>
</dbReference>
<dbReference type="InterPro" id="IPR000326">
    <property type="entry name" value="P_Acid_Pase_2/haloperoxidase"/>
</dbReference>
<dbReference type="PANTHER" id="PTHR14969:SF17">
    <property type="entry name" value="INACTIVE PHOSPHOLIPID PHOSPHATASE 7"/>
    <property type="match status" value="1"/>
</dbReference>
<dbReference type="PANTHER" id="PTHR14969">
    <property type="entry name" value="SPHINGOSINE-1-PHOSPHATE PHOSPHOHYDROLASE"/>
    <property type="match status" value="1"/>
</dbReference>
<dbReference type="Pfam" id="PF01569">
    <property type="entry name" value="PAP2"/>
    <property type="match status" value="1"/>
</dbReference>
<dbReference type="SMART" id="SM00014">
    <property type="entry name" value="acidPPc"/>
    <property type="match status" value="1"/>
</dbReference>
<dbReference type="SUPFAM" id="SSF48317">
    <property type="entry name" value="Acid phosphatase/Vanadium-dependent haloperoxidase"/>
    <property type="match status" value="1"/>
</dbReference>
<reference key="1">
    <citation type="submission" date="2004-01" db="EMBL/GenBank/DDBJ databases">
        <authorList>
            <consortium name="NIH - Zebrafish Gene Collection (ZGC) project"/>
        </authorList>
    </citation>
    <scope>NUCLEOTIDE SEQUENCE [LARGE SCALE MRNA]</scope>
    <source>
        <tissue>Embryo</tissue>
    </source>
</reference>
<sequence>MPANQTRSRARERNNVLNRPEFMSLNQPIKSGGGGGGGESRGTARRPSQRQQQNQQQQGDNPQPENNKDKKELPEEDCMQLNPSFKGIAMNSLLAIDICMSKRLGVCAHPSSSWGSVRSMVKLLALTGHGIPWVFGTIVCLMRSNTLAGQEVLVNLLLALLLDVMTVSGMQKLVKRKGPWEMPPGFFDYLAMDIYSFPAAHASRAVMVSKFLLAHLVLAVPLRILLVLWAILVGISRVLLGRHHLTDVGCGFALGFLHYSLVEMVWLSSNTCQTLISIGTFNWSPLY</sequence>
<name>PLPP7_DANRE</name>
<protein>
    <recommendedName>
        <fullName evidence="2">Inactive phospholipid phosphatase 7</fullName>
    </recommendedName>
    <alternativeName>
        <fullName>Phosphatidic acid phosphatase type 2 domain-containing protein 3</fullName>
    </alternativeName>
</protein>
<comment type="function">
    <text evidence="1">Plays a role as negative regulator of myoblast differentiation, in part through effects on MTOR signaling. Has no detectable enzymatic activity (By similarity).</text>
</comment>
<comment type="subcellular location">
    <subcellularLocation>
        <location>Nucleus envelope</location>
    </subcellularLocation>
    <subcellularLocation>
        <location>Endoplasmic reticulum membrane</location>
    </subcellularLocation>
    <subcellularLocation>
        <location>Membrane</location>
        <topology>Multi-pass membrane protein</topology>
    </subcellularLocation>
    <text evidence="1">Both the N- and C-terminal are exposed to the cytoplasm/nucleoplasm.</text>
</comment>
<comment type="similarity">
    <text evidence="5">Belongs to the PA-phosphatase related phosphoesterase family.</text>
</comment>
<evidence type="ECO:0000250" key="1"/>
<evidence type="ECO:0000250" key="2">
    <source>
        <dbReference type="UniProtKB" id="Q8NBV4"/>
    </source>
</evidence>
<evidence type="ECO:0000255" key="3"/>
<evidence type="ECO:0000256" key="4">
    <source>
        <dbReference type="SAM" id="MobiDB-lite"/>
    </source>
</evidence>
<evidence type="ECO:0000305" key="5"/>
<accession>Q6P0E8</accession>
<feature type="chain" id="PRO_0000239404" description="Inactive phospholipid phosphatase 7">
    <location>
        <begin position="1"/>
        <end position="287"/>
    </location>
</feature>
<feature type="topological domain" description="Cytoplasmic" evidence="3">
    <location>
        <begin position="1"/>
        <end position="120"/>
    </location>
</feature>
<feature type="transmembrane region" description="Helical" evidence="3">
    <location>
        <begin position="121"/>
        <end position="141"/>
    </location>
</feature>
<feature type="topological domain" description="Extracellular" evidence="3">
    <location>
        <begin position="142"/>
        <end position="146"/>
    </location>
</feature>
<feature type="transmembrane region" description="Helical" evidence="3">
    <location>
        <begin position="147"/>
        <end position="167"/>
    </location>
</feature>
<feature type="topological domain" description="Cytoplasmic" evidence="3">
    <location>
        <begin position="168"/>
        <end position="215"/>
    </location>
</feature>
<feature type="transmembrane region" description="Helical" evidence="3">
    <location>
        <begin position="216"/>
        <end position="236"/>
    </location>
</feature>
<feature type="topological domain" description="Extracellular" evidence="3">
    <location>
        <begin position="237"/>
        <end position="247"/>
    </location>
</feature>
<feature type="transmembrane region" description="Helical" evidence="3">
    <location>
        <begin position="248"/>
        <end position="268"/>
    </location>
</feature>
<feature type="topological domain" description="Cytoplasmic" evidence="3">
    <location>
        <begin position="269"/>
        <end position="287"/>
    </location>
</feature>
<feature type="region of interest" description="Disordered" evidence="4">
    <location>
        <begin position="1"/>
        <end position="75"/>
    </location>
</feature>
<feature type="compositionally biased region" description="Gly residues" evidence="4">
    <location>
        <begin position="31"/>
        <end position="40"/>
    </location>
</feature>
<feature type="compositionally biased region" description="Low complexity" evidence="4">
    <location>
        <begin position="49"/>
        <end position="65"/>
    </location>
</feature>
<proteinExistence type="evidence at transcript level"/>
<keyword id="KW-0256">Endoplasmic reticulum</keyword>
<keyword id="KW-0472">Membrane</keyword>
<keyword id="KW-0539">Nucleus</keyword>
<keyword id="KW-1185">Reference proteome</keyword>
<keyword id="KW-0812">Transmembrane</keyword>
<keyword id="KW-1133">Transmembrane helix</keyword>